<name>SFRB_GEOSL</name>
<keyword id="KW-0004">4Fe-4S</keyword>
<keyword id="KW-1003">Cell membrane</keyword>
<keyword id="KW-0963">Cytoplasm</keyword>
<keyword id="KW-0903">Direct protein sequencing</keyword>
<keyword id="KW-0274">FAD</keyword>
<keyword id="KW-0285">Flavoprotein</keyword>
<keyword id="KW-0408">Iron</keyword>
<keyword id="KW-0411">Iron-sulfur</keyword>
<keyword id="KW-0472">Membrane</keyword>
<keyword id="KW-0479">Metal-binding</keyword>
<keyword id="KW-0521">NADP</keyword>
<keyword id="KW-0560">Oxidoreductase</keyword>
<keyword id="KW-1185">Reference proteome</keyword>
<accession>Q74FU5</accession>
<feature type="initiator methionine" description="Removed" evidence="2">
    <location>
        <position position="1"/>
    </location>
</feature>
<feature type="chain" id="PRO_0000429035" description="NADPH-Fe(3+) oxidoreductase subunit beta">
    <location>
        <begin position="2"/>
        <end position="672"/>
    </location>
</feature>
<feature type="binding site" evidence="1">
    <location>
        <position position="203"/>
    </location>
    <ligand>
        <name>[4Fe-4S] cluster</name>
        <dbReference type="ChEBI" id="CHEBI:49883"/>
    </ligand>
</feature>
<feature type="binding site" evidence="1">
    <location>
        <position position="207"/>
    </location>
    <ligand>
        <name>[4Fe-4S] cluster</name>
        <dbReference type="ChEBI" id="CHEBI:49883"/>
    </ligand>
</feature>
<feature type="binding site" evidence="1">
    <location>
        <position position="211"/>
    </location>
    <ligand>
        <name>[4Fe-4S] cluster</name>
        <dbReference type="ChEBI" id="CHEBI:49883"/>
    </ligand>
</feature>
<feature type="binding site" evidence="1">
    <location>
        <position position="215"/>
    </location>
    <ligand>
        <name>[4Fe-4S] cluster</name>
        <dbReference type="ChEBI" id="CHEBI:49883"/>
    </ligand>
</feature>
<feature type="binding site" evidence="1">
    <location>
        <begin position="254"/>
        <end position="283"/>
    </location>
    <ligand>
        <name>FAD</name>
        <dbReference type="ChEBI" id="CHEBI:57692"/>
    </ligand>
</feature>
<feature type="binding site" evidence="1">
    <location>
        <begin position="388"/>
        <end position="421"/>
    </location>
    <ligand>
        <name>NADP(+)</name>
        <dbReference type="ChEBI" id="CHEBI:58349"/>
    </ligand>
</feature>
<feature type="binding site" evidence="1">
    <location>
        <begin position="552"/>
        <end position="562"/>
    </location>
    <ligand>
        <name>FAD</name>
        <dbReference type="ChEBI" id="CHEBI:57692"/>
    </ligand>
</feature>
<dbReference type="EC" id="1.-.-.-"/>
<dbReference type="EMBL" id="AE017180">
    <property type="protein sequence ID" value="AAR33841.1"/>
    <property type="molecule type" value="Genomic_DNA"/>
</dbReference>
<dbReference type="RefSeq" id="NP_951568.1">
    <property type="nucleotide sequence ID" value="NC_002939.5"/>
</dbReference>
<dbReference type="RefSeq" id="WP_010941178.1">
    <property type="nucleotide sequence ID" value="NC_002939.5"/>
</dbReference>
<dbReference type="SMR" id="Q74FU5"/>
<dbReference type="STRING" id="243231.GSU0510"/>
<dbReference type="EnsemblBacteria" id="AAR33841">
    <property type="protein sequence ID" value="AAR33841"/>
    <property type="gene ID" value="GSU0510"/>
</dbReference>
<dbReference type="KEGG" id="gsu:GSU0510"/>
<dbReference type="PATRIC" id="fig|243231.5.peg.511"/>
<dbReference type="eggNOG" id="COG0493">
    <property type="taxonomic scope" value="Bacteria"/>
</dbReference>
<dbReference type="eggNOG" id="COG1894">
    <property type="taxonomic scope" value="Bacteria"/>
</dbReference>
<dbReference type="HOGENOM" id="CLU_000422_3_4_7"/>
<dbReference type="InParanoid" id="Q74FU5"/>
<dbReference type="OrthoDB" id="9803192at2"/>
<dbReference type="Proteomes" id="UP000000577">
    <property type="component" value="Chromosome"/>
</dbReference>
<dbReference type="GO" id="GO:0005737">
    <property type="term" value="C:cytoplasm"/>
    <property type="evidence" value="ECO:0007669"/>
    <property type="project" value="UniProtKB-SubCell"/>
</dbReference>
<dbReference type="GO" id="GO:0005886">
    <property type="term" value="C:plasma membrane"/>
    <property type="evidence" value="ECO:0007669"/>
    <property type="project" value="UniProtKB-SubCell"/>
</dbReference>
<dbReference type="GO" id="GO:0051539">
    <property type="term" value="F:4 iron, 4 sulfur cluster binding"/>
    <property type="evidence" value="ECO:0007669"/>
    <property type="project" value="UniProtKB-KW"/>
</dbReference>
<dbReference type="GO" id="GO:0046872">
    <property type="term" value="F:metal ion binding"/>
    <property type="evidence" value="ECO:0007669"/>
    <property type="project" value="UniProtKB-KW"/>
</dbReference>
<dbReference type="GO" id="GO:0016491">
    <property type="term" value="F:oxidoreductase activity"/>
    <property type="evidence" value="ECO:0000314"/>
    <property type="project" value="TIGR"/>
</dbReference>
<dbReference type="GO" id="GO:0009061">
    <property type="term" value="P:anaerobic respiration"/>
    <property type="evidence" value="ECO:0000304"/>
    <property type="project" value="TIGR"/>
</dbReference>
<dbReference type="FunFam" id="3.50.50.60:FF:000041">
    <property type="entry name" value="Glutamate synthase, small subunit"/>
    <property type="match status" value="1"/>
</dbReference>
<dbReference type="Gene3D" id="1.10.1060.10">
    <property type="entry name" value="Alpha-helical ferredoxin"/>
    <property type="match status" value="1"/>
</dbReference>
<dbReference type="Gene3D" id="3.50.50.60">
    <property type="entry name" value="FAD/NAD(P)-binding domain"/>
    <property type="match status" value="3"/>
</dbReference>
<dbReference type="InterPro" id="IPR028261">
    <property type="entry name" value="DPD_II"/>
</dbReference>
<dbReference type="InterPro" id="IPR036188">
    <property type="entry name" value="FAD/NAD-bd_sf"/>
</dbReference>
<dbReference type="InterPro" id="IPR023753">
    <property type="entry name" value="FAD/NAD-binding_dom"/>
</dbReference>
<dbReference type="InterPro" id="IPR009051">
    <property type="entry name" value="Helical_ferredxn"/>
</dbReference>
<dbReference type="InterPro" id="IPR019575">
    <property type="entry name" value="Nuop51_4Fe4S-bd"/>
</dbReference>
<dbReference type="InterPro" id="IPR037207">
    <property type="entry name" value="Nuop51_4Fe4S-bd_sf"/>
</dbReference>
<dbReference type="PANTHER" id="PTHR42783">
    <property type="entry name" value="GLUTAMATE SYNTHASE [NADPH] SMALL CHAIN"/>
    <property type="match status" value="1"/>
</dbReference>
<dbReference type="PANTHER" id="PTHR42783:SF3">
    <property type="entry name" value="GLUTAMATE SYNTHASE [NADPH] SMALL CHAIN-RELATED"/>
    <property type="match status" value="1"/>
</dbReference>
<dbReference type="Pfam" id="PF14691">
    <property type="entry name" value="Fer4_20"/>
    <property type="match status" value="1"/>
</dbReference>
<dbReference type="Pfam" id="PF10589">
    <property type="entry name" value="NADH_4Fe-4S"/>
    <property type="match status" value="1"/>
</dbReference>
<dbReference type="Pfam" id="PF07992">
    <property type="entry name" value="Pyr_redox_2"/>
    <property type="match status" value="1"/>
</dbReference>
<dbReference type="PRINTS" id="PR00419">
    <property type="entry name" value="ADXRDTASE"/>
</dbReference>
<dbReference type="SMART" id="SM00928">
    <property type="entry name" value="NADH_4Fe-4S"/>
    <property type="match status" value="1"/>
</dbReference>
<dbReference type="SUPFAM" id="SSF46548">
    <property type="entry name" value="alpha-helical ferredoxin"/>
    <property type="match status" value="1"/>
</dbReference>
<dbReference type="SUPFAM" id="SSF140490">
    <property type="entry name" value="Nqo1C-terminal domain-like"/>
    <property type="match status" value="1"/>
</dbReference>
<dbReference type="SUPFAM" id="SSF51971">
    <property type="entry name" value="Nucleotide-binding domain"/>
    <property type="match status" value="1"/>
</dbReference>
<evidence type="ECO:0000255" key="1"/>
<evidence type="ECO:0000269" key="2">
    <source>
    </source>
</evidence>
<evidence type="ECO:0000269" key="3">
    <source>
    </source>
</evidence>
<evidence type="ECO:0000305" key="4"/>
<comment type="function">
    <text evidence="2 3">May catalyze the NADPH oxidation in the SfrAB NADPH-Fe(3+) oxidoreductase enzymatic complex. Probably involved in acetate metabolism and not in the reduction of Fe(3+) chelates. May serve as a major route for NADP regeneration.</text>
</comment>
<comment type="cofactor">
    <cofactor>
        <name>[4Fe-4S] cluster</name>
        <dbReference type="ChEBI" id="CHEBI:49883"/>
    </cofactor>
    <text>Binds 1 [4Fe-4S] cluster.</text>
</comment>
<comment type="cofactor">
    <cofactor>
        <name>FAD</name>
        <dbReference type="ChEBI" id="CHEBI:57692"/>
    </cofactor>
</comment>
<comment type="subunit">
    <text evidence="2">Heterotetramer with 2 alpha subunits.</text>
</comment>
<comment type="subcellular location">
    <subcellularLocation>
        <location>Cytoplasm</location>
    </subcellularLocation>
    <subcellularLocation>
        <location>Cell membrane</location>
        <topology>Peripheral membrane protein</topology>
    </subcellularLocation>
</comment>
<comment type="caution">
    <text evidence="4">PubMed:17906154 suggests that SfrAB is involved in acetate metabolism and does not participate directly in the reduction of Fe(3+) chelates, as was initially proposed in PubMed:11443080.</text>
</comment>
<reference key="1">
    <citation type="journal article" date="2003" name="Science">
        <title>Genome of Geobacter sulfurreducens: metal reduction in subsurface environments.</title>
        <authorList>
            <person name="Methe B.A."/>
            <person name="Nelson K.E."/>
            <person name="Eisen J.A."/>
            <person name="Paulsen I.T."/>
            <person name="Nelson W.C."/>
            <person name="Heidelberg J.F."/>
            <person name="Wu D."/>
            <person name="Wu M."/>
            <person name="Ward N.L."/>
            <person name="Beanan M.J."/>
            <person name="Dodson R.J."/>
            <person name="Madupu R."/>
            <person name="Brinkac L.M."/>
            <person name="Daugherty S.C."/>
            <person name="DeBoy R.T."/>
            <person name="Durkin A.S."/>
            <person name="Gwinn M.L."/>
            <person name="Kolonay J.F."/>
            <person name="Sullivan S.A."/>
            <person name="Haft D.H."/>
            <person name="Selengut J."/>
            <person name="Davidsen T.M."/>
            <person name="Zafar N."/>
            <person name="White O."/>
            <person name="Tran B."/>
            <person name="Romero C."/>
            <person name="Forberger H.A."/>
            <person name="Weidman J.F."/>
            <person name="Khouri H.M."/>
            <person name="Feldblyum T.V."/>
            <person name="Utterback T.R."/>
            <person name="Van Aken S.E."/>
            <person name="Lovley D.R."/>
            <person name="Fraser C.M."/>
        </authorList>
    </citation>
    <scope>NUCLEOTIDE SEQUENCE [LARGE SCALE GENOMIC DNA]</scope>
    <source>
        <strain>ATCC 51573 / DSM 12127 / PCA</strain>
    </source>
</reference>
<reference key="2">
    <citation type="journal article" date="2001" name="J. Bacteriol.">
        <title>Isolation and characterization of a soluble NADPH-dependent Fe(III) reductase from Geobacter sulfurreducens.</title>
        <authorList>
            <person name="Kaufmann F."/>
            <person name="Lovley D.R."/>
        </authorList>
    </citation>
    <scope>PROTEIN SEQUENCE OF 2-21</scope>
    <scope>SUBCELLULAR LOCATION</scope>
    <scope>SUBUNIT</scope>
    <scope>FUNCTION</scope>
    <source>
        <strain>ATCC 51573 / DSM 12127 / PCA</strain>
    </source>
</reference>
<reference key="3">
    <citation type="journal article" date="2007" name="Microbiology">
        <title>Involvement of Geobacter sulfurreducens SfrAB in acetate metabolism rather than intracellular, respiration-linked Fe(III) citrate reduction.</title>
        <authorList>
            <person name="Coppi M.V."/>
            <person name="O'neil R.A."/>
            <person name="Leang C."/>
            <person name="Kaufmann F."/>
            <person name="Methe B.A."/>
            <person name="Nevin K.P."/>
            <person name="Woodard T.L."/>
            <person name="Liu A."/>
            <person name="Lovley D.R."/>
        </authorList>
    </citation>
    <scope>FUNCTION</scope>
    <scope>SUBCELLULAR LOCATION</scope>
    <source>
        <strain>DL-1 / KN400</strain>
    </source>
</reference>
<gene>
    <name type="primary">sfrB</name>
    <name type="ordered locus">GSU0510</name>
</gene>
<protein>
    <recommendedName>
        <fullName>NADPH-Fe(3+) oxidoreductase subunit beta</fullName>
        <ecNumber>1.-.-.-</ecNumber>
    </recommendedName>
    <alternativeName>
        <fullName>Soluble Fe(3+) reductase beta subunit</fullName>
    </alternativeName>
</protein>
<organism>
    <name type="scientific">Geobacter sulfurreducens (strain ATCC 51573 / DSM 12127 / PCA)</name>
    <dbReference type="NCBI Taxonomy" id="243231"/>
    <lineage>
        <taxon>Bacteria</taxon>
        <taxon>Pseudomonadati</taxon>
        <taxon>Thermodesulfobacteriota</taxon>
        <taxon>Desulfuromonadia</taxon>
        <taxon>Geobacterales</taxon>
        <taxon>Geobacteraceae</taxon>
        <taxon>Geobacter</taxon>
    </lineage>
</organism>
<proteinExistence type="evidence at protein level"/>
<sequence length="672" mass="74273">MAQVVFSSWGRTIVDNRKGGEAQDVSFRLPTTLDGERQIAAFMGWDGIILYDLKVDVPAMAAEYMKRVQTQYCCGKCTPGKKGTKVLADVLAAIIEGRATEADLDTIDDLADLLTNCKCTLCQSSTIPVLDAVKHFREDFLAYITGIRKPANVHRFIDKYTAPCMDRCPAHIDIPAYIEAIKEYRFDESLDIIRDNMPLPSVCGRVCPHPCETHCRRKNVDDSVNIMVLKRSASDYEWMHNAAPPMQPKPQKNKKVAIVGAGPAGLACAYYLALEGYPCTIYEALPEGYGGGMIAVGIPPYRQPRHLLQRDIDIISSMGVDIIYDTRIGKDISLEELKQKFDAVFLAPGAHRSKPMGVEGEDKGYKGFLKGGIDFLREAYMGRPTGMGKKVVVVGGGNTAIDCVRVALREGAEESTLLYRRSRKEMPADVWEVDGADEEGVRFEFQVLPTRVLVDENEQVTGVECVRMALGEPDASGRRRPEPVPGSEFVVECDTVIPAIGQDPDLSFIPDNLGIDITKWNTVVTKYVPLKDAAGKDLKDGMGNPLARVLITDLEGVFAGGDAEIGPLTVVACIGNAHRAARVIQRWLEEGKAYLTEDELMEDILTNMPVYDKNEKVPWLDSRERAHQAEVHGQERASKGNYQEVELGFVDTQAVEEAERCLRCYRVAMAAI</sequence>